<dbReference type="EMBL" id="CP000453">
    <property type="protein sequence ID" value="ABI56801.1"/>
    <property type="molecule type" value="Genomic_DNA"/>
</dbReference>
<dbReference type="RefSeq" id="WP_011629196.1">
    <property type="nucleotide sequence ID" value="NC_008340.1"/>
</dbReference>
<dbReference type="SMR" id="Q0A8N6"/>
<dbReference type="KEGG" id="aeh:Mlg_1452"/>
<dbReference type="eggNOG" id="COG2915">
    <property type="taxonomic scope" value="Bacteria"/>
</dbReference>
<dbReference type="HOGENOM" id="CLU_098920_0_0_6"/>
<dbReference type="OrthoDB" id="9788031at2"/>
<dbReference type="Proteomes" id="UP000001962">
    <property type="component" value="Chromosome"/>
</dbReference>
<dbReference type="GO" id="GO:0005737">
    <property type="term" value="C:cytoplasm"/>
    <property type="evidence" value="ECO:0007669"/>
    <property type="project" value="UniProtKB-SubCell"/>
</dbReference>
<dbReference type="GO" id="GO:0005886">
    <property type="term" value="C:plasma membrane"/>
    <property type="evidence" value="ECO:0007669"/>
    <property type="project" value="UniProtKB-SubCell"/>
</dbReference>
<dbReference type="Gene3D" id="1.10.3890.10">
    <property type="entry name" value="HflD-like"/>
    <property type="match status" value="1"/>
</dbReference>
<dbReference type="HAMAP" id="MF_00695">
    <property type="entry name" value="HflD_protein"/>
    <property type="match status" value="1"/>
</dbReference>
<dbReference type="InterPro" id="IPR007451">
    <property type="entry name" value="HflD"/>
</dbReference>
<dbReference type="InterPro" id="IPR035932">
    <property type="entry name" value="HflD-like_sf"/>
</dbReference>
<dbReference type="NCBIfam" id="NF001246">
    <property type="entry name" value="PRK00218.1-2"/>
    <property type="match status" value="1"/>
</dbReference>
<dbReference type="PANTHER" id="PTHR38100">
    <property type="entry name" value="HIGH FREQUENCY LYSOGENIZATION PROTEIN HFLD"/>
    <property type="match status" value="1"/>
</dbReference>
<dbReference type="PANTHER" id="PTHR38100:SF1">
    <property type="entry name" value="HIGH FREQUENCY LYSOGENIZATION PROTEIN HFLD"/>
    <property type="match status" value="1"/>
</dbReference>
<dbReference type="Pfam" id="PF04356">
    <property type="entry name" value="DUF489"/>
    <property type="match status" value="1"/>
</dbReference>
<dbReference type="SUPFAM" id="SSF101322">
    <property type="entry name" value="YcfC-like"/>
    <property type="match status" value="1"/>
</dbReference>
<accession>Q0A8N6</accession>
<gene>
    <name evidence="1" type="primary">hflD</name>
    <name type="ordered locus">Mlg_1452</name>
</gene>
<reference key="1">
    <citation type="submission" date="2006-08" db="EMBL/GenBank/DDBJ databases">
        <title>Complete sequence of Alkalilimnicola ehrilichei MLHE-1.</title>
        <authorList>
            <person name="Copeland A."/>
            <person name="Lucas S."/>
            <person name="Lapidus A."/>
            <person name="Barry K."/>
            <person name="Detter J.C."/>
            <person name="Glavina del Rio T."/>
            <person name="Hammon N."/>
            <person name="Israni S."/>
            <person name="Dalin E."/>
            <person name="Tice H."/>
            <person name="Pitluck S."/>
            <person name="Sims D."/>
            <person name="Brettin T."/>
            <person name="Bruce D."/>
            <person name="Han C."/>
            <person name="Tapia R."/>
            <person name="Gilna P."/>
            <person name="Schmutz J."/>
            <person name="Larimer F."/>
            <person name="Land M."/>
            <person name="Hauser L."/>
            <person name="Kyrpides N."/>
            <person name="Mikhailova N."/>
            <person name="Oremland R.S."/>
            <person name="Hoeft S.E."/>
            <person name="Switzer-Blum J."/>
            <person name="Kulp T."/>
            <person name="King G."/>
            <person name="Tabita R."/>
            <person name="Witte B."/>
            <person name="Santini J.M."/>
            <person name="Basu P."/>
            <person name="Hollibaugh J.T."/>
            <person name="Xie G."/>
            <person name="Stolz J.F."/>
            <person name="Richardson P."/>
        </authorList>
    </citation>
    <scope>NUCLEOTIDE SEQUENCE [LARGE SCALE GENOMIC DNA]</scope>
    <source>
        <strain>ATCC BAA-1101 / DSM 17681 / MLHE-1</strain>
    </source>
</reference>
<protein>
    <recommendedName>
        <fullName evidence="1">High frequency lysogenization protein HflD homolog</fullName>
    </recommendedName>
</protein>
<organism>
    <name type="scientific">Alkalilimnicola ehrlichii (strain ATCC BAA-1101 / DSM 17681 / MLHE-1)</name>
    <dbReference type="NCBI Taxonomy" id="187272"/>
    <lineage>
        <taxon>Bacteria</taxon>
        <taxon>Pseudomonadati</taxon>
        <taxon>Pseudomonadota</taxon>
        <taxon>Gammaproteobacteria</taxon>
        <taxon>Chromatiales</taxon>
        <taxon>Ectothiorhodospiraceae</taxon>
        <taxon>Alkalilimnicola</taxon>
    </lineage>
</organism>
<evidence type="ECO:0000255" key="1">
    <source>
        <dbReference type="HAMAP-Rule" id="MF_00695"/>
    </source>
</evidence>
<feature type="chain" id="PRO_0000390636" description="High frequency lysogenization protein HflD homolog">
    <location>
        <begin position="1"/>
        <end position="205"/>
    </location>
</feature>
<name>HFLD_ALKEH</name>
<keyword id="KW-0997">Cell inner membrane</keyword>
<keyword id="KW-1003">Cell membrane</keyword>
<keyword id="KW-0963">Cytoplasm</keyword>
<keyword id="KW-0472">Membrane</keyword>
<keyword id="KW-1185">Reference proteome</keyword>
<comment type="subcellular location">
    <subcellularLocation>
        <location>Cytoplasm</location>
    </subcellularLocation>
    <subcellularLocation>
        <location evidence="1">Cell inner membrane</location>
        <topology evidence="1">Peripheral membrane protein</topology>
        <orientation evidence="1">Cytoplasmic side</orientation>
    </subcellularLocation>
</comment>
<comment type="similarity">
    <text evidence="1">Belongs to the HflD family.</text>
</comment>
<proteinExistence type="inferred from homology"/>
<sequence length="205" mass="22556">MRDRFEEQALALGAAMQALGLVRELATAGRLDDAQAEPLMSSLVKPYEGDLDRLYGGPTALAPGLRRLVTQLTNPQSMESTRYLAGVMHLEKKLSKNRAMLGQLGEGLEAARRQADYFHPLHENVLRNLGALYGETISQLGPRIMVRGDPGHLQDERIAAGIRTMLLAAIRAASLWRECGGGKLTLILRRQRLVQAAHALLERVD</sequence>